<dbReference type="EC" id="4.3.3.6" evidence="1"/>
<dbReference type="EMBL" id="CP000730">
    <property type="protein sequence ID" value="ABX28537.1"/>
    <property type="molecule type" value="Genomic_DNA"/>
</dbReference>
<dbReference type="RefSeq" id="WP_000034728.1">
    <property type="nucleotide sequence ID" value="NC_010079.1"/>
</dbReference>
<dbReference type="SMR" id="A8YZL5"/>
<dbReference type="GeneID" id="66838811"/>
<dbReference type="KEGG" id="sax:USA300HOU_0511"/>
<dbReference type="HOGENOM" id="CLU_055352_1_0_9"/>
<dbReference type="UniPathway" id="UPA00245"/>
<dbReference type="GO" id="GO:0036381">
    <property type="term" value="F:pyridoxal 5'-phosphate synthase (glutamine hydrolysing) activity"/>
    <property type="evidence" value="ECO:0007669"/>
    <property type="project" value="UniProtKB-UniRule"/>
</dbReference>
<dbReference type="GO" id="GO:0006520">
    <property type="term" value="P:amino acid metabolic process"/>
    <property type="evidence" value="ECO:0007669"/>
    <property type="project" value="TreeGrafter"/>
</dbReference>
<dbReference type="GO" id="GO:0042823">
    <property type="term" value="P:pyridoxal phosphate biosynthetic process"/>
    <property type="evidence" value="ECO:0007669"/>
    <property type="project" value="UniProtKB-UniRule"/>
</dbReference>
<dbReference type="GO" id="GO:0008615">
    <property type="term" value="P:pyridoxine biosynthetic process"/>
    <property type="evidence" value="ECO:0007669"/>
    <property type="project" value="TreeGrafter"/>
</dbReference>
<dbReference type="CDD" id="cd04727">
    <property type="entry name" value="pdxS"/>
    <property type="match status" value="1"/>
</dbReference>
<dbReference type="FunFam" id="3.20.20.70:FF:000001">
    <property type="entry name" value="Pyridoxine biosynthesis protein PDX1"/>
    <property type="match status" value="1"/>
</dbReference>
<dbReference type="Gene3D" id="3.20.20.70">
    <property type="entry name" value="Aldolase class I"/>
    <property type="match status" value="1"/>
</dbReference>
<dbReference type="HAMAP" id="MF_01824">
    <property type="entry name" value="PdxS"/>
    <property type="match status" value="1"/>
</dbReference>
<dbReference type="InterPro" id="IPR013785">
    <property type="entry name" value="Aldolase_TIM"/>
</dbReference>
<dbReference type="InterPro" id="IPR001852">
    <property type="entry name" value="PdxS/SNZ"/>
</dbReference>
<dbReference type="InterPro" id="IPR033755">
    <property type="entry name" value="PdxS/SNZ_N"/>
</dbReference>
<dbReference type="InterPro" id="IPR011060">
    <property type="entry name" value="RibuloseP-bd_barrel"/>
</dbReference>
<dbReference type="NCBIfam" id="NF003215">
    <property type="entry name" value="PRK04180.1"/>
    <property type="match status" value="1"/>
</dbReference>
<dbReference type="NCBIfam" id="TIGR00343">
    <property type="entry name" value="pyridoxal 5'-phosphate synthase lyase subunit PdxS"/>
    <property type="match status" value="1"/>
</dbReference>
<dbReference type="PANTHER" id="PTHR31829">
    <property type="entry name" value="PYRIDOXAL 5'-PHOSPHATE SYNTHASE SUBUNIT SNZ1-RELATED"/>
    <property type="match status" value="1"/>
</dbReference>
<dbReference type="PANTHER" id="PTHR31829:SF0">
    <property type="entry name" value="PYRIDOXAL 5'-PHOSPHATE SYNTHASE SUBUNIT SNZ1-RELATED"/>
    <property type="match status" value="1"/>
</dbReference>
<dbReference type="Pfam" id="PF01680">
    <property type="entry name" value="SOR_SNZ"/>
    <property type="match status" value="1"/>
</dbReference>
<dbReference type="PIRSF" id="PIRSF029271">
    <property type="entry name" value="Pdx1"/>
    <property type="match status" value="1"/>
</dbReference>
<dbReference type="SUPFAM" id="SSF51366">
    <property type="entry name" value="Ribulose-phoshate binding barrel"/>
    <property type="match status" value="1"/>
</dbReference>
<dbReference type="PROSITE" id="PS01235">
    <property type="entry name" value="PDXS_SNZ_1"/>
    <property type="match status" value="1"/>
</dbReference>
<dbReference type="PROSITE" id="PS51129">
    <property type="entry name" value="PDXS_SNZ_2"/>
    <property type="match status" value="1"/>
</dbReference>
<feature type="chain" id="PRO_1000088413" description="Pyridoxal 5'-phosphate synthase subunit PdxS">
    <location>
        <begin position="1"/>
        <end position="295"/>
    </location>
</feature>
<feature type="active site" description="Schiff-base intermediate with D-ribose 5-phosphate" evidence="1">
    <location>
        <position position="82"/>
    </location>
</feature>
<feature type="binding site" evidence="1">
    <location>
        <position position="25"/>
    </location>
    <ligand>
        <name>D-ribose 5-phosphate</name>
        <dbReference type="ChEBI" id="CHEBI:78346"/>
    </ligand>
</feature>
<feature type="binding site" evidence="1">
    <location>
        <position position="154"/>
    </location>
    <ligand>
        <name>D-ribose 5-phosphate</name>
        <dbReference type="ChEBI" id="CHEBI:78346"/>
    </ligand>
</feature>
<feature type="binding site" evidence="1">
    <location>
        <position position="166"/>
    </location>
    <ligand>
        <name>D-glyceraldehyde 3-phosphate</name>
        <dbReference type="ChEBI" id="CHEBI:59776"/>
    </ligand>
</feature>
<feature type="binding site" evidence="1">
    <location>
        <position position="215"/>
    </location>
    <ligand>
        <name>D-ribose 5-phosphate</name>
        <dbReference type="ChEBI" id="CHEBI:78346"/>
    </ligand>
</feature>
<feature type="binding site" evidence="1">
    <location>
        <begin position="236"/>
        <end position="237"/>
    </location>
    <ligand>
        <name>D-ribose 5-phosphate</name>
        <dbReference type="ChEBI" id="CHEBI:78346"/>
    </ligand>
</feature>
<gene>
    <name evidence="1" type="primary">pdxS</name>
    <name type="ordered locus">USA300HOU_0511</name>
</gene>
<accession>A8YZL5</accession>
<comment type="function">
    <text evidence="1">Catalyzes the formation of pyridoxal 5'-phosphate from ribose 5-phosphate (RBP), glyceraldehyde 3-phosphate (G3P) and ammonia. The ammonia is provided by the PdxT subunit. Can also use ribulose 5-phosphate and dihydroxyacetone phosphate as substrates, resulting from enzyme-catalyzed isomerization of RBP and G3P, respectively.</text>
</comment>
<comment type="catalytic activity">
    <reaction evidence="1">
        <text>aldehydo-D-ribose 5-phosphate + D-glyceraldehyde 3-phosphate + L-glutamine = pyridoxal 5'-phosphate + L-glutamate + phosphate + 3 H2O + H(+)</text>
        <dbReference type="Rhea" id="RHEA:31507"/>
        <dbReference type="ChEBI" id="CHEBI:15377"/>
        <dbReference type="ChEBI" id="CHEBI:15378"/>
        <dbReference type="ChEBI" id="CHEBI:29985"/>
        <dbReference type="ChEBI" id="CHEBI:43474"/>
        <dbReference type="ChEBI" id="CHEBI:58273"/>
        <dbReference type="ChEBI" id="CHEBI:58359"/>
        <dbReference type="ChEBI" id="CHEBI:59776"/>
        <dbReference type="ChEBI" id="CHEBI:597326"/>
        <dbReference type="EC" id="4.3.3.6"/>
    </reaction>
</comment>
<comment type="pathway">
    <text evidence="1">Cofactor biosynthesis; pyridoxal 5'-phosphate biosynthesis.</text>
</comment>
<comment type="subunit">
    <text evidence="1">In the presence of PdxT, forms a dodecamer of heterodimers.</text>
</comment>
<comment type="similarity">
    <text evidence="1">Belongs to the PdxS/SNZ family.</text>
</comment>
<keyword id="KW-0456">Lyase</keyword>
<keyword id="KW-0663">Pyridoxal phosphate</keyword>
<keyword id="KW-0704">Schiff base</keyword>
<evidence type="ECO:0000255" key="1">
    <source>
        <dbReference type="HAMAP-Rule" id="MF_01824"/>
    </source>
</evidence>
<reference key="1">
    <citation type="journal article" date="2007" name="BMC Microbiol.">
        <title>Subtle genetic changes enhance virulence of methicillin resistant and sensitive Staphylococcus aureus.</title>
        <authorList>
            <person name="Highlander S.K."/>
            <person name="Hulten K.G."/>
            <person name="Qin X."/>
            <person name="Jiang H."/>
            <person name="Yerrapragada S."/>
            <person name="Mason E.O. Jr."/>
            <person name="Shang Y."/>
            <person name="Williams T.M."/>
            <person name="Fortunov R.M."/>
            <person name="Liu Y."/>
            <person name="Igboeli O."/>
            <person name="Petrosino J."/>
            <person name="Tirumalai M."/>
            <person name="Uzman A."/>
            <person name="Fox G.E."/>
            <person name="Cardenas A.M."/>
            <person name="Muzny D.M."/>
            <person name="Hemphill L."/>
            <person name="Ding Y."/>
            <person name="Dugan S."/>
            <person name="Blyth P.R."/>
            <person name="Buhay C.J."/>
            <person name="Dinh H.H."/>
            <person name="Hawes A.C."/>
            <person name="Holder M."/>
            <person name="Kovar C.L."/>
            <person name="Lee S.L."/>
            <person name="Liu W."/>
            <person name="Nazareth L.V."/>
            <person name="Wang Q."/>
            <person name="Zhou J."/>
            <person name="Kaplan S.L."/>
            <person name="Weinstock G.M."/>
        </authorList>
    </citation>
    <scope>NUCLEOTIDE SEQUENCE [LARGE SCALE GENOMIC DNA]</scope>
    <source>
        <strain>USA300 / TCH1516</strain>
    </source>
</reference>
<protein>
    <recommendedName>
        <fullName evidence="1">Pyridoxal 5'-phosphate synthase subunit PdxS</fullName>
        <shortName evidence="1">PLP synthase subunit PdxS</shortName>
        <ecNumber evidence="1">4.3.3.6</ecNumber>
    </recommendedName>
    <alternativeName>
        <fullName evidence="1">Pdx1</fullName>
    </alternativeName>
</protein>
<proteinExistence type="inferred from homology"/>
<name>PDXS_STAAT</name>
<organism>
    <name type="scientific">Staphylococcus aureus (strain USA300 / TCH1516)</name>
    <dbReference type="NCBI Taxonomy" id="451516"/>
    <lineage>
        <taxon>Bacteria</taxon>
        <taxon>Bacillati</taxon>
        <taxon>Bacillota</taxon>
        <taxon>Bacilli</taxon>
        <taxon>Bacillales</taxon>
        <taxon>Staphylococcaceae</taxon>
        <taxon>Staphylococcus</taxon>
    </lineage>
</organism>
<sequence>MSKIIGSDRVKRGMAEMQKGGVIMDVVNAEQARIAEEAGAVAVMALERVPSDIRAAGGVARMANPKIVEEVMNAVSIPVMAKARIGHITEARVLEAMGVDYIDESEVLTPADEEYHLRKDQFTVPFVCGCRNLGEAARRIGEGAAMLRTKGEPGTGNIVEAVRHMRQVNSEVSRLTVMNDDEIMTFAKDIGAPYEILKQIKDNGRLPVVNFAAGGVATPQDAALMMELGADGVFVGSGIFKSEDPEKFAKAIVQATTHYQDYELIGRLASELGTAMKGLDINQLSLEERMQERGW</sequence>